<proteinExistence type="inferred from homology"/>
<protein>
    <recommendedName>
        <fullName evidence="1">UPF0178 protein YaiI</fullName>
    </recommendedName>
</protein>
<accession>Q57SH7</accession>
<name>YAII_SALCH</name>
<dbReference type="EMBL" id="AE017220">
    <property type="protein sequence ID" value="AAX64334.1"/>
    <property type="molecule type" value="Genomic_DNA"/>
</dbReference>
<dbReference type="RefSeq" id="WP_001539275.1">
    <property type="nucleotide sequence ID" value="NC_006905.1"/>
</dbReference>
<dbReference type="KEGG" id="sec:SCH_0428"/>
<dbReference type="HOGENOM" id="CLU_106619_1_0_6"/>
<dbReference type="Proteomes" id="UP000000538">
    <property type="component" value="Chromosome"/>
</dbReference>
<dbReference type="CDD" id="cd18720">
    <property type="entry name" value="PIN_YqxD-like"/>
    <property type="match status" value="1"/>
</dbReference>
<dbReference type="HAMAP" id="MF_00489">
    <property type="entry name" value="UPF0178"/>
    <property type="match status" value="1"/>
</dbReference>
<dbReference type="InterPro" id="IPR003791">
    <property type="entry name" value="UPF0178"/>
</dbReference>
<dbReference type="NCBIfam" id="NF001095">
    <property type="entry name" value="PRK00124.1"/>
    <property type="match status" value="1"/>
</dbReference>
<dbReference type="PANTHER" id="PTHR35146">
    <property type="entry name" value="UPF0178 PROTEIN YAII"/>
    <property type="match status" value="1"/>
</dbReference>
<dbReference type="PANTHER" id="PTHR35146:SF1">
    <property type="entry name" value="UPF0178 PROTEIN YAII"/>
    <property type="match status" value="1"/>
</dbReference>
<dbReference type="Pfam" id="PF02639">
    <property type="entry name" value="DUF188"/>
    <property type="match status" value="1"/>
</dbReference>
<comment type="similarity">
    <text evidence="1">Belongs to the UPF0178 family.</text>
</comment>
<evidence type="ECO:0000255" key="1">
    <source>
        <dbReference type="HAMAP-Rule" id="MF_00489"/>
    </source>
</evidence>
<sequence length="151" mass="16922">MTIWVDADACPNVIKEILYRAAERMQLPLILVANQALRVPPSRFIRTLRVAAGFDVADNEIVRQCEAGDLVITADIPLAAEVLEKGAAALNPRGERYSDATIRERLTMCDFMDTLRASSVQTGGPNTLSPRDRQHFAAELDKWWLESQRKK</sequence>
<reference key="1">
    <citation type="journal article" date="2005" name="Nucleic Acids Res.">
        <title>The genome sequence of Salmonella enterica serovar Choleraesuis, a highly invasive and resistant zoonotic pathogen.</title>
        <authorList>
            <person name="Chiu C.-H."/>
            <person name="Tang P."/>
            <person name="Chu C."/>
            <person name="Hu S."/>
            <person name="Bao Q."/>
            <person name="Yu J."/>
            <person name="Chou Y.-Y."/>
            <person name="Wang H.-S."/>
            <person name="Lee Y.-S."/>
        </authorList>
    </citation>
    <scope>NUCLEOTIDE SEQUENCE [LARGE SCALE GENOMIC DNA]</scope>
    <source>
        <strain>SC-B67</strain>
    </source>
</reference>
<organism>
    <name type="scientific">Salmonella choleraesuis (strain SC-B67)</name>
    <dbReference type="NCBI Taxonomy" id="321314"/>
    <lineage>
        <taxon>Bacteria</taxon>
        <taxon>Pseudomonadati</taxon>
        <taxon>Pseudomonadota</taxon>
        <taxon>Gammaproteobacteria</taxon>
        <taxon>Enterobacterales</taxon>
        <taxon>Enterobacteriaceae</taxon>
        <taxon>Salmonella</taxon>
    </lineage>
</organism>
<feature type="chain" id="PRO_0000176001" description="UPF0178 protein YaiI">
    <location>
        <begin position="1"/>
        <end position="151"/>
    </location>
</feature>
<gene>
    <name evidence="1" type="primary">yaiI</name>
    <name type="ordered locus">SCH_0428</name>
</gene>